<accession>Q08II5</accession>
<organismHost>
    <name type="scientific">Aves</name>
    <dbReference type="NCBI Taxonomy" id="8782"/>
</organismHost>
<organismHost>
    <name type="scientific">Equus caballus</name>
    <name type="common">Horse</name>
    <dbReference type="NCBI Taxonomy" id="9796"/>
</organismHost>
<keyword id="KW-1262">Eukaryotic host gene expression shutoff by virus</keyword>
<keyword id="KW-1191">Eukaryotic host transcription shutoff by virus</keyword>
<keyword id="KW-1035">Host cytoplasm</keyword>
<keyword id="KW-1190">Host gene expression shutoff by virus</keyword>
<keyword id="KW-1048">Host nucleus</keyword>
<keyword id="KW-0945">Host-virus interaction</keyword>
<keyword id="KW-1104">Inhibition of host RNA polymerase II by virus</keyword>
<keyword id="KW-0547">Nucleotide-binding</keyword>
<keyword id="KW-0548">Nucleotidyltransferase</keyword>
<keyword id="KW-0597">Phosphoprotein</keyword>
<keyword id="KW-0696">RNA-directed RNA polymerase</keyword>
<keyword id="KW-0808">Transferase</keyword>
<keyword id="KW-0693">Viral RNA replication</keyword>
<keyword id="KW-1195">Viral transcription</keyword>
<gene>
    <name evidence="1" type="primary">PB1</name>
</gene>
<protein>
    <recommendedName>
        <fullName evidence="1">RNA-directed RNA polymerase catalytic subunit</fullName>
        <ecNumber evidence="1">2.7.7.48</ecNumber>
    </recommendedName>
    <alternativeName>
        <fullName evidence="1">Polymerase basic protein 1</fullName>
        <shortName evidence="1">PB1</shortName>
    </alternativeName>
    <alternativeName>
        <fullName evidence="1">RNA-directed RNA polymerase subunit P1</fullName>
    </alternativeName>
</protein>
<reference key="1">
    <citation type="submission" date="2006-09" db="EMBL/GenBank/DDBJ databases">
        <title>Evolutionary characterization of H3N8 viruses isolated from ducks in Hokkaido.</title>
        <authorList>
            <person name="Kida H."/>
            <person name="Sakoda Y."/>
        </authorList>
    </citation>
    <scope>NUCLEOTIDE SEQUENCE [GENOMIC RNA]</scope>
</reference>
<feature type="chain" id="PRO_0000279594" description="RNA-directed RNA polymerase catalytic subunit">
    <location>
        <begin position="1"/>
        <end position="757"/>
    </location>
</feature>
<feature type="domain" description="RdRp catalytic" evidence="1">
    <location>
        <begin position="286"/>
        <end position="483"/>
    </location>
</feature>
<feature type="region of interest" description="Disordered" evidence="2">
    <location>
        <begin position="53"/>
        <end position="82"/>
    </location>
</feature>
<feature type="region of interest" description="Promoter-binding site" evidence="1">
    <location>
        <begin position="249"/>
        <end position="256"/>
    </location>
</feature>
<feature type="short sequence motif" description="Nuclear localization signal" evidence="1">
    <location>
        <begin position="187"/>
        <end position="195"/>
    </location>
</feature>
<feature type="short sequence motif" description="Nuclear localization signal" evidence="1">
    <location>
        <begin position="203"/>
        <end position="216"/>
    </location>
</feature>
<name>RDRP_I80A6</name>
<organism>
    <name type="scientific">Influenza A virus (strain A/Duck/Hokkaido/8/1980 H3N8)</name>
    <dbReference type="NCBI Taxonomy" id="387207"/>
    <lineage>
        <taxon>Viruses</taxon>
        <taxon>Riboviria</taxon>
        <taxon>Orthornavirae</taxon>
        <taxon>Negarnaviricota</taxon>
        <taxon>Polyploviricotina</taxon>
        <taxon>Insthoviricetes</taxon>
        <taxon>Articulavirales</taxon>
        <taxon>Orthomyxoviridae</taxon>
        <taxon>Alphainfluenzavirus</taxon>
        <taxon>Alphainfluenzavirus influenzae</taxon>
        <taxon>Influenza A virus</taxon>
    </lineage>
</organism>
<evidence type="ECO:0000255" key="1">
    <source>
        <dbReference type="HAMAP-Rule" id="MF_04065"/>
    </source>
</evidence>
<evidence type="ECO:0000256" key="2">
    <source>
        <dbReference type="SAM" id="MobiDB-lite"/>
    </source>
</evidence>
<sequence>MDVNPTLLFLKVPAQNAISTTFPYTGDPPYSHGTGTGYTMDTVNRTHQYSEKGKWATNTETGAPQLNPIDGPLPEDNEPSGYAQTDCVLEAMAFLEESHPGIFENSCLETMEVVQQTRVDKLTQGRQTYDWTLNRNQPAATALANTIEVFRSNGLTANESGRLIDFLKDVMESMDKEEMEITTHFQRKRRVRDNMTKKMVTQRTIGKKKQRLNKRSYLIRALTLNTMTKDAERGKLKRRAIATPGMQIRGFVYFVETLARSICEKLEQSGLPVGGNEKKAKLANVVRKMMTNSQDTELSFTITGDNTKWNENQNPRMFLAMITYITRNQPEWFRNVLSIAPIMFSNKMARLGKGYMFESKSMKLRTQIPAEMLANIDLKYFNESTRKKIEKIRPLLIDGTASLSPGMMMGMFNMLSTVLGVSILNLGQKRYTKTTYWWDGLQSSDDFALIVNAPNHEGIQAGVDRFYRTCKLVGINMSKKKSYINRTGTFEFTSFFYRYGFVANFSMELPSFGVSGINESADMSIGVTVIKNNMINNDLGPATAQMALQLFIKDYRYTYRCHRGDTQIQTRRSFELKKLWEQTRSKAGLLVSDGGPNLYNIRNLHIPEVCLKWELMDEDYQGRLCNPLNPFVSHKEIESVNNAVVMPAHGPAKSMEYDAVATTHSWIPKRNRSILNTSQRGILEDEQMYQKCCNLFEKFFPSSSYRRPVGISSMVEAMVSRARIDARIDFESGRIKKEEFAEIMKICSTIEELRRQK</sequence>
<dbReference type="EC" id="2.7.7.48" evidence="1"/>
<dbReference type="EMBL" id="AB274964">
    <property type="protein sequence ID" value="BAF32965.1"/>
    <property type="molecule type" value="Genomic_RNA"/>
</dbReference>
<dbReference type="SMR" id="Q08II5"/>
<dbReference type="Proteomes" id="UP000008578">
    <property type="component" value="Genome"/>
</dbReference>
<dbReference type="GO" id="GO:0030430">
    <property type="term" value="C:host cell cytoplasm"/>
    <property type="evidence" value="ECO:0007669"/>
    <property type="project" value="UniProtKB-SubCell"/>
</dbReference>
<dbReference type="GO" id="GO:0042025">
    <property type="term" value="C:host cell nucleus"/>
    <property type="evidence" value="ECO:0007669"/>
    <property type="project" value="UniProtKB-SubCell"/>
</dbReference>
<dbReference type="GO" id="GO:0000166">
    <property type="term" value="F:nucleotide binding"/>
    <property type="evidence" value="ECO:0007669"/>
    <property type="project" value="UniProtKB-UniRule"/>
</dbReference>
<dbReference type="GO" id="GO:0003723">
    <property type="term" value="F:RNA binding"/>
    <property type="evidence" value="ECO:0007669"/>
    <property type="project" value="InterPro"/>
</dbReference>
<dbReference type="GO" id="GO:0003968">
    <property type="term" value="F:RNA-directed RNA polymerase activity"/>
    <property type="evidence" value="ECO:0007669"/>
    <property type="project" value="UniProtKB-UniRule"/>
</dbReference>
<dbReference type="GO" id="GO:0006351">
    <property type="term" value="P:DNA-templated transcription"/>
    <property type="evidence" value="ECO:0007669"/>
    <property type="project" value="UniProtKB-UniRule"/>
</dbReference>
<dbReference type="GO" id="GO:0039657">
    <property type="term" value="P:symbiont-mediated suppression of host gene expression"/>
    <property type="evidence" value="ECO:0007669"/>
    <property type="project" value="UniProtKB-KW"/>
</dbReference>
<dbReference type="GO" id="GO:0039523">
    <property type="term" value="P:symbiont-mediated suppression of host mRNA transcription via inhibition of RNA polymerase II activity"/>
    <property type="evidence" value="ECO:0007669"/>
    <property type="project" value="UniProtKB-UniRule"/>
</dbReference>
<dbReference type="GO" id="GO:0039694">
    <property type="term" value="P:viral RNA genome replication"/>
    <property type="evidence" value="ECO:0007669"/>
    <property type="project" value="UniProtKB-UniRule"/>
</dbReference>
<dbReference type="GO" id="GO:0019083">
    <property type="term" value="P:viral transcription"/>
    <property type="evidence" value="ECO:0007669"/>
    <property type="project" value="UniProtKB-KW"/>
</dbReference>
<dbReference type="Gene3D" id="6.10.140.720">
    <property type="match status" value="1"/>
</dbReference>
<dbReference type="HAMAP" id="MF_04065">
    <property type="entry name" value="INFV_RDRP"/>
    <property type="match status" value="1"/>
</dbReference>
<dbReference type="InterPro" id="IPR007099">
    <property type="entry name" value="RNA-dir_pol_NSvirus"/>
</dbReference>
<dbReference type="InterPro" id="IPR001407">
    <property type="entry name" value="RNA_pol_PB1_influenza"/>
</dbReference>
<dbReference type="Pfam" id="PF00602">
    <property type="entry name" value="Flu_PB1"/>
    <property type="match status" value="1"/>
</dbReference>
<dbReference type="PIRSF" id="PIRSF000827">
    <property type="entry name" value="RdRPol_OMV"/>
    <property type="match status" value="1"/>
</dbReference>
<dbReference type="PROSITE" id="PS50525">
    <property type="entry name" value="RDRP_SSRNA_NEG_SEG"/>
    <property type="match status" value="1"/>
</dbReference>
<comment type="function">
    <text evidence="1">RNA-dependent RNA polymerase which is responsible for replication and transcription of virus RNA segments. The transcription of viral mRNAs occurs by a unique mechanism called cap-snatching. 5' methylated caps of cellular mRNAs are cleaved after 10-13 nucleotides by PA. In turn, these short capped RNAs are used as primers by PB1 for transcription of viral mRNAs. During virus replication, PB1 initiates RNA synthesis and copy vRNA into complementary RNA (cRNA) which in turn serves as a template for the production of more vRNAs.</text>
</comment>
<comment type="catalytic activity">
    <reaction evidence="1">
        <text>RNA(n) + a ribonucleoside 5'-triphosphate = RNA(n+1) + diphosphate</text>
        <dbReference type="Rhea" id="RHEA:21248"/>
        <dbReference type="Rhea" id="RHEA-COMP:14527"/>
        <dbReference type="Rhea" id="RHEA-COMP:17342"/>
        <dbReference type="ChEBI" id="CHEBI:33019"/>
        <dbReference type="ChEBI" id="CHEBI:61557"/>
        <dbReference type="ChEBI" id="CHEBI:140395"/>
        <dbReference type="EC" id="2.7.7.48"/>
    </reaction>
</comment>
<comment type="subunit">
    <text evidence="1">Influenza RNA polymerase is composed of three subunits: PB1, PB2 and PA. Interacts (via N-terminus) with PA (via C-terminus). Interacts (via C-terminus) with PB2 (via N-terminus); this interaction is essential for transcription initiation.</text>
</comment>
<comment type="subcellular location">
    <subcellularLocation>
        <location evidence="1">Host nucleus</location>
    </subcellularLocation>
    <subcellularLocation>
        <location evidence="1">Host cytoplasm</location>
    </subcellularLocation>
</comment>
<comment type="PTM">
    <text evidence="1">Phosphorylated by host PRKCA.</text>
</comment>
<comment type="similarity">
    <text evidence="1">Belongs to the influenza viruses polymerase PB1 family.</text>
</comment>
<proteinExistence type="inferred from homology"/>